<gene>
    <name type="primary">hisF</name>
    <name type="ordered locus">YPO1543</name>
    <name type="ordered locus">y2627</name>
    <name type="ordered locus">YP_1432</name>
</gene>
<evidence type="ECO:0000250" key="1"/>
<evidence type="ECO:0000255" key="2"/>
<evidence type="ECO:0000305" key="3"/>
<comment type="function">
    <text evidence="1">IGPS catalyzes the conversion of PRFAR and glutamine to IGP, AICAR and glutamate. The HisF subunit catalyzes the cyclization activity that produces IGP and AICAR from PRFAR using the ammonia provided by the HisH subunit (By similarity).</text>
</comment>
<comment type="catalytic activity">
    <reaction>
        <text>5-[(5-phospho-1-deoxy-D-ribulos-1-ylimino)methylamino]-1-(5-phospho-beta-D-ribosyl)imidazole-4-carboxamide + L-glutamine = D-erythro-1-(imidazol-4-yl)glycerol 3-phosphate + 5-amino-1-(5-phospho-beta-D-ribosyl)imidazole-4-carboxamide + L-glutamate + H(+)</text>
        <dbReference type="Rhea" id="RHEA:24793"/>
        <dbReference type="ChEBI" id="CHEBI:15378"/>
        <dbReference type="ChEBI" id="CHEBI:29985"/>
        <dbReference type="ChEBI" id="CHEBI:58278"/>
        <dbReference type="ChEBI" id="CHEBI:58359"/>
        <dbReference type="ChEBI" id="CHEBI:58475"/>
        <dbReference type="ChEBI" id="CHEBI:58525"/>
        <dbReference type="EC" id="4.3.2.10"/>
    </reaction>
</comment>
<comment type="pathway">
    <text>Amino-acid biosynthesis; L-histidine biosynthesis; L-histidine from 5-phospho-alpha-D-ribose 1-diphosphate: step 5/9.</text>
</comment>
<comment type="subunit">
    <text evidence="1">Heterodimer of HisH and HisF.</text>
</comment>
<comment type="subcellular location">
    <subcellularLocation>
        <location evidence="1">Cytoplasm</location>
    </subcellularLocation>
</comment>
<comment type="similarity">
    <text evidence="3">Belongs to the HisA/HisF family.</text>
</comment>
<organism>
    <name type="scientific">Yersinia pestis</name>
    <dbReference type="NCBI Taxonomy" id="632"/>
    <lineage>
        <taxon>Bacteria</taxon>
        <taxon>Pseudomonadati</taxon>
        <taxon>Pseudomonadota</taxon>
        <taxon>Gammaproteobacteria</taxon>
        <taxon>Enterobacterales</taxon>
        <taxon>Yersiniaceae</taxon>
        <taxon>Yersinia</taxon>
    </lineage>
</organism>
<sequence>MLAKRIIPCLDVKDGQVVKGVQFRNHEIIGDIVPLAQRYAQEGADELVFYDITASSDGRVVDKSWVARVAEVIDIPFCVAGGIKSVEDASQILTFGADKISINSPALADPTLITRLADRYGVQCIVVGIDTWYDTESDSYQVYQFTGDEKRTKATTWQTEDWVKEVQLRGAGEIVLNMMNQDGVRNGYDLRQLQQMRAICHVPLIASGGAGTPDHFLEAFRDADVDGALAASVFHKQIINIGELKKYLSEQGVEIRVC</sequence>
<feature type="chain" id="PRO_0000142272" description="Imidazole glycerol phosphate synthase subunit HisF">
    <location>
        <begin position="1"/>
        <end position="258"/>
    </location>
</feature>
<feature type="active site" evidence="2">
    <location>
        <position position="11"/>
    </location>
</feature>
<feature type="active site" evidence="2">
    <location>
        <position position="130"/>
    </location>
</feature>
<proteinExistence type="inferred from homology"/>
<protein>
    <recommendedName>
        <fullName>Imidazole glycerol phosphate synthase subunit HisF</fullName>
        <ecNumber>4.3.2.10</ecNumber>
    </recommendedName>
    <alternativeName>
        <fullName>IGP synthase cyclase subunit</fullName>
    </alternativeName>
    <alternativeName>
        <fullName>IGP synthase subunit HisF</fullName>
    </alternativeName>
    <alternativeName>
        <fullName>ImGP synthase subunit HisF</fullName>
        <shortName>IGPS subunit HisF</shortName>
    </alternativeName>
</protein>
<reference key="1">
    <citation type="journal article" date="2001" name="Nature">
        <title>Genome sequence of Yersinia pestis, the causative agent of plague.</title>
        <authorList>
            <person name="Parkhill J."/>
            <person name="Wren B.W."/>
            <person name="Thomson N.R."/>
            <person name="Titball R.W."/>
            <person name="Holden M.T.G."/>
            <person name="Prentice M.B."/>
            <person name="Sebaihia M."/>
            <person name="James K.D."/>
            <person name="Churcher C.M."/>
            <person name="Mungall K.L."/>
            <person name="Baker S."/>
            <person name="Basham D."/>
            <person name="Bentley S.D."/>
            <person name="Brooks K."/>
            <person name="Cerdeno-Tarraga A.-M."/>
            <person name="Chillingworth T."/>
            <person name="Cronin A."/>
            <person name="Davies R.M."/>
            <person name="Davis P."/>
            <person name="Dougan G."/>
            <person name="Feltwell T."/>
            <person name="Hamlin N."/>
            <person name="Holroyd S."/>
            <person name="Jagels K."/>
            <person name="Karlyshev A.V."/>
            <person name="Leather S."/>
            <person name="Moule S."/>
            <person name="Oyston P.C.F."/>
            <person name="Quail M.A."/>
            <person name="Rutherford K.M."/>
            <person name="Simmonds M."/>
            <person name="Skelton J."/>
            <person name="Stevens K."/>
            <person name="Whitehead S."/>
            <person name="Barrell B.G."/>
        </authorList>
    </citation>
    <scope>NUCLEOTIDE SEQUENCE [LARGE SCALE GENOMIC DNA]</scope>
    <source>
        <strain>CO-92 / Biovar Orientalis</strain>
    </source>
</reference>
<reference key="2">
    <citation type="journal article" date="2002" name="J. Bacteriol.">
        <title>Genome sequence of Yersinia pestis KIM.</title>
        <authorList>
            <person name="Deng W."/>
            <person name="Burland V."/>
            <person name="Plunkett G. III"/>
            <person name="Boutin A."/>
            <person name="Mayhew G.F."/>
            <person name="Liss P."/>
            <person name="Perna N.T."/>
            <person name="Rose D.J."/>
            <person name="Mau B."/>
            <person name="Zhou S."/>
            <person name="Schwartz D.C."/>
            <person name="Fetherston J.D."/>
            <person name="Lindler L.E."/>
            <person name="Brubaker R.R."/>
            <person name="Plano G.V."/>
            <person name="Straley S.C."/>
            <person name="McDonough K.A."/>
            <person name="Nilles M.L."/>
            <person name="Matson J.S."/>
            <person name="Blattner F.R."/>
            <person name="Perry R.D."/>
        </authorList>
    </citation>
    <scope>NUCLEOTIDE SEQUENCE [LARGE SCALE GENOMIC DNA]</scope>
    <source>
        <strain>KIM10+ / Biovar Mediaevalis</strain>
    </source>
</reference>
<reference key="3">
    <citation type="journal article" date="2004" name="DNA Res.">
        <title>Complete genome sequence of Yersinia pestis strain 91001, an isolate avirulent to humans.</title>
        <authorList>
            <person name="Song Y."/>
            <person name="Tong Z."/>
            <person name="Wang J."/>
            <person name="Wang L."/>
            <person name="Guo Z."/>
            <person name="Han Y."/>
            <person name="Zhang J."/>
            <person name="Pei D."/>
            <person name="Zhou D."/>
            <person name="Qin H."/>
            <person name="Pang X."/>
            <person name="Han Y."/>
            <person name="Zhai J."/>
            <person name="Li M."/>
            <person name="Cui B."/>
            <person name="Qi Z."/>
            <person name="Jin L."/>
            <person name="Dai R."/>
            <person name="Chen F."/>
            <person name="Li S."/>
            <person name="Ye C."/>
            <person name="Du Z."/>
            <person name="Lin W."/>
            <person name="Wang J."/>
            <person name="Yu J."/>
            <person name="Yang H."/>
            <person name="Wang J."/>
            <person name="Huang P."/>
            <person name="Yang R."/>
        </authorList>
    </citation>
    <scope>NUCLEOTIDE SEQUENCE [LARGE SCALE GENOMIC DNA]</scope>
    <source>
        <strain>91001 / Biovar Mediaevalis</strain>
    </source>
</reference>
<keyword id="KW-0028">Amino-acid biosynthesis</keyword>
<keyword id="KW-0963">Cytoplasm</keyword>
<keyword id="KW-0368">Histidine biosynthesis</keyword>
<keyword id="KW-0456">Lyase</keyword>
<keyword id="KW-1185">Reference proteome</keyword>
<accession>Q8ZFY0</accession>
<accession>Q0WGM9</accession>
<name>HIS6_YERPE</name>
<dbReference type="EC" id="4.3.2.10"/>
<dbReference type="EMBL" id="AL590842">
    <property type="protein sequence ID" value="CAL20189.1"/>
    <property type="molecule type" value="Genomic_DNA"/>
</dbReference>
<dbReference type="EMBL" id="AE009952">
    <property type="protein sequence ID" value="AAM86181.1"/>
    <property type="molecule type" value="Genomic_DNA"/>
</dbReference>
<dbReference type="EMBL" id="AE017042">
    <property type="protein sequence ID" value="AAS61673.1"/>
    <property type="molecule type" value="Genomic_DNA"/>
</dbReference>
<dbReference type="PIR" id="AC0188">
    <property type="entry name" value="AC0188"/>
</dbReference>
<dbReference type="RefSeq" id="WP_002211890.1">
    <property type="nucleotide sequence ID" value="NZ_WUCM01000031.1"/>
</dbReference>
<dbReference type="RefSeq" id="YP_002346559.1">
    <property type="nucleotide sequence ID" value="NC_003143.1"/>
</dbReference>
<dbReference type="SMR" id="Q8ZFY0"/>
<dbReference type="STRING" id="214092.YPO1543"/>
<dbReference type="PaxDb" id="214092-YPO1543"/>
<dbReference type="DNASU" id="1147574"/>
<dbReference type="EnsemblBacteria" id="AAS61673">
    <property type="protein sequence ID" value="AAS61673"/>
    <property type="gene ID" value="YP_1432"/>
</dbReference>
<dbReference type="GeneID" id="57977025"/>
<dbReference type="KEGG" id="ype:YPO1543"/>
<dbReference type="KEGG" id="ypk:y2627"/>
<dbReference type="KEGG" id="ypm:YP_1432"/>
<dbReference type="PATRIC" id="fig|214092.21.peg.1880"/>
<dbReference type="eggNOG" id="COG0107">
    <property type="taxonomic scope" value="Bacteria"/>
</dbReference>
<dbReference type="HOGENOM" id="CLU_048577_4_0_6"/>
<dbReference type="OMA" id="WEVYIHG"/>
<dbReference type="OrthoDB" id="9781903at2"/>
<dbReference type="UniPathway" id="UPA00031">
    <property type="reaction ID" value="UER00010"/>
</dbReference>
<dbReference type="Proteomes" id="UP000000815">
    <property type="component" value="Chromosome"/>
</dbReference>
<dbReference type="Proteomes" id="UP000001019">
    <property type="component" value="Chromosome"/>
</dbReference>
<dbReference type="Proteomes" id="UP000002490">
    <property type="component" value="Chromosome"/>
</dbReference>
<dbReference type="GO" id="GO:0005737">
    <property type="term" value="C:cytoplasm"/>
    <property type="evidence" value="ECO:0007669"/>
    <property type="project" value="UniProtKB-SubCell"/>
</dbReference>
<dbReference type="GO" id="GO:0000107">
    <property type="term" value="F:imidazoleglycerol-phosphate synthase activity"/>
    <property type="evidence" value="ECO:0000318"/>
    <property type="project" value="GO_Central"/>
</dbReference>
<dbReference type="GO" id="GO:0016829">
    <property type="term" value="F:lyase activity"/>
    <property type="evidence" value="ECO:0007669"/>
    <property type="project" value="UniProtKB-KW"/>
</dbReference>
<dbReference type="GO" id="GO:0000105">
    <property type="term" value="P:L-histidine biosynthetic process"/>
    <property type="evidence" value="ECO:0007669"/>
    <property type="project" value="UniProtKB-UniRule"/>
</dbReference>
<dbReference type="CDD" id="cd04731">
    <property type="entry name" value="HisF"/>
    <property type="match status" value="1"/>
</dbReference>
<dbReference type="FunFam" id="3.20.20.70:FF:000006">
    <property type="entry name" value="Imidazole glycerol phosphate synthase subunit HisF"/>
    <property type="match status" value="1"/>
</dbReference>
<dbReference type="Gene3D" id="3.20.20.70">
    <property type="entry name" value="Aldolase class I"/>
    <property type="match status" value="1"/>
</dbReference>
<dbReference type="HAMAP" id="MF_01013">
    <property type="entry name" value="HisF"/>
    <property type="match status" value="1"/>
</dbReference>
<dbReference type="InterPro" id="IPR013785">
    <property type="entry name" value="Aldolase_TIM"/>
</dbReference>
<dbReference type="InterPro" id="IPR006062">
    <property type="entry name" value="His_biosynth"/>
</dbReference>
<dbReference type="InterPro" id="IPR004651">
    <property type="entry name" value="HisF"/>
</dbReference>
<dbReference type="InterPro" id="IPR050064">
    <property type="entry name" value="IGPS_HisA/HisF"/>
</dbReference>
<dbReference type="InterPro" id="IPR011060">
    <property type="entry name" value="RibuloseP-bd_barrel"/>
</dbReference>
<dbReference type="NCBIfam" id="TIGR00735">
    <property type="entry name" value="hisF"/>
    <property type="match status" value="1"/>
</dbReference>
<dbReference type="PANTHER" id="PTHR21235:SF2">
    <property type="entry name" value="IMIDAZOLE GLYCEROL PHOSPHATE SYNTHASE HISHF"/>
    <property type="match status" value="1"/>
</dbReference>
<dbReference type="PANTHER" id="PTHR21235">
    <property type="entry name" value="IMIDAZOLE GLYCEROL PHOSPHATE SYNTHASE SUBUNIT HISF/H IGP SYNTHASE SUBUNIT HISF/H"/>
    <property type="match status" value="1"/>
</dbReference>
<dbReference type="Pfam" id="PF00977">
    <property type="entry name" value="His_biosynth"/>
    <property type="match status" value="1"/>
</dbReference>
<dbReference type="SUPFAM" id="SSF51366">
    <property type="entry name" value="Ribulose-phoshate binding barrel"/>
    <property type="match status" value="1"/>
</dbReference>